<comment type="catalytic activity">
    <reaction>
        <text>tRNA(Tyr) + L-tyrosine + ATP = L-tyrosyl-tRNA(Tyr) + AMP + diphosphate + H(+)</text>
        <dbReference type="Rhea" id="RHEA:10220"/>
        <dbReference type="Rhea" id="RHEA-COMP:9706"/>
        <dbReference type="Rhea" id="RHEA-COMP:9707"/>
        <dbReference type="ChEBI" id="CHEBI:15378"/>
        <dbReference type="ChEBI" id="CHEBI:30616"/>
        <dbReference type="ChEBI" id="CHEBI:33019"/>
        <dbReference type="ChEBI" id="CHEBI:58315"/>
        <dbReference type="ChEBI" id="CHEBI:78442"/>
        <dbReference type="ChEBI" id="CHEBI:78536"/>
        <dbReference type="ChEBI" id="CHEBI:456215"/>
        <dbReference type="EC" id="6.1.1.1"/>
    </reaction>
</comment>
<comment type="subunit">
    <text evidence="1">Homodimer.</text>
</comment>
<comment type="subcellular location">
    <subcellularLocation>
        <location evidence="1">Cytoplasm</location>
    </subcellularLocation>
</comment>
<comment type="similarity">
    <text evidence="2">Belongs to the class-I aminoacyl-tRNA synthetase family.</text>
</comment>
<proteinExistence type="inferred from homology"/>
<organism>
    <name type="scientific">Encephalitozoon cuniculi (strain GB-M1)</name>
    <name type="common">Microsporidian parasite</name>
    <dbReference type="NCBI Taxonomy" id="284813"/>
    <lineage>
        <taxon>Eukaryota</taxon>
        <taxon>Fungi</taxon>
        <taxon>Fungi incertae sedis</taxon>
        <taxon>Microsporidia</taxon>
        <taxon>Unikaryonidae</taxon>
        <taxon>Encephalitozoon</taxon>
    </lineage>
</organism>
<gene>
    <name type="ordered locus">ECU05_1120i</name>
</gene>
<dbReference type="EC" id="6.1.1.1"/>
<dbReference type="EMBL" id="AL590445">
    <property type="protein sequence ID" value="CAD26632.1"/>
    <property type="molecule type" value="Genomic_DNA"/>
</dbReference>
<dbReference type="RefSeq" id="NP_597455.1">
    <property type="nucleotide sequence ID" value="NM_001041321.1"/>
</dbReference>
<dbReference type="SMR" id="Q8SRV7"/>
<dbReference type="FunCoup" id="Q8SRV7">
    <property type="interactions" value="226"/>
</dbReference>
<dbReference type="STRING" id="284813.Q8SRV7"/>
<dbReference type="GeneID" id="859121"/>
<dbReference type="KEGG" id="ecu:ECU05_1120i"/>
<dbReference type="VEuPathDB" id="MicrosporidiaDB:ECU05_1120i"/>
<dbReference type="HOGENOM" id="CLU_035267_0_1_1"/>
<dbReference type="InParanoid" id="Q8SRV7"/>
<dbReference type="OMA" id="AWINDKG"/>
<dbReference type="OrthoDB" id="197206at2759"/>
<dbReference type="Proteomes" id="UP000000819">
    <property type="component" value="Chromosome V"/>
</dbReference>
<dbReference type="GO" id="GO:0005737">
    <property type="term" value="C:cytoplasm"/>
    <property type="evidence" value="ECO:0007669"/>
    <property type="project" value="UniProtKB-SubCell"/>
</dbReference>
<dbReference type="GO" id="GO:0005524">
    <property type="term" value="F:ATP binding"/>
    <property type="evidence" value="ECO:0007669"/>
    <property type="project" value="UniProtKB-KW"/>
</dbReference>
<dbReference type="GO" id="GO:0004831">
    <property type="term" value="F:tyrosine-tRNA ligase activity"/>
    <property type="evidence" value="ECO:0007669"/>
    <property type="project" value="UniProtKB-EC"/>
</dbReference>
<dbReference type="GO" id="GO:0006437">
    <property type="term" value="P:tyrosyl-tRNA aminoacylation"/>
    <property type="evidence" value="ECO:0007669"/>
    <property type="project" value="InterPro"/>
</dbReference>
<dbReference type="CDD" id="cd00805">
    <property type="entry name" value="TyrRS_core"/>
    <property type="match status" value="1"/>
</dbReference>
<dbReference type="FunFam" id="3.40.50.620:FF:000040">
    <property type="entry name" value="Tyrosine--tRNA ligase"/>
    <property type="match status" value="1"/>
</dbReference>
<dbReference type="Gene3D" id="3.40.50.620">
    <property type="entry name" value="HUPs"/>
    <property type="match status" value="1"/>
</dbReference>
<dbReference type="Gene3D" id="1.10.240.10">
    <property type="entry name" value="Tyrosyl-Transfer RNA Synthetase"/>
    <property type="match status" value="1"/>
</dbReference>
<dbReference type="InterPro" id="IPR002305">
    <property type="entry name" value="aa-tRNA-synth_Ic"/>
</dbReference>
<dbReference type="InterPro" id="IPR014729">
    <property type="entry name" value="Rossmann-like_a/b/a_fold"/>
</dbReference>
<dbReference type="InterPro" id="IPR002307">
    <property type="entry name" value="Tyr-tRNA-ligase"/>
</dbReference>
<dbReference type="InterPro" id="IPR023617">
    <property type="entry name" value="Tyr-tRNA-ligase_arc/euk-type"/>
</dbReference>
<dbReference type="InterPro" id="IPR050489">
    <property type="entry name" value="Tyr-tRNA_synthase"/>
</dbReference>
<dbReference type="NCBIfam" id="NF006330">
    <property type="entry name" value="PRK08560.1"/>
    <property type="match status" value="1"/>
</dbReference>
<dbReference type="NCBIfam" id="TIGR00234">
    <property type="entry name" value="tyrS"/>
    <property type="match status" value="1"/>
</dbReference>
<dbReference type="PANTHER" id="PTHR46264:SF4">
    <property type="entry name" value="TYROSINE--TRNA LIGASE, CYTOPLASMIC"/>
    <property type="match status" value="1"/>
</dbReference>
<dbReference type="PANTHER" id="PTHR46264">
    <property type="entry name" value="TYROSINE-TRNA LIGASE"/>
    <property type="match status" value="1"/>
</dbReference>
<dbReference type="Pfam" id="PF00579">
    <property type="entry name" value="tRNA-synt_1b"/>
    <property type="match status" value="1"/>
</dbReference>
<dbReference type="PIRSF" id="PIRSF006588">
    <property type="entry name" value="TyrRS_arch_euk"/>
    <property type="match status" value="1"/>
</dbReference>
<dbReference type="PRINTS" id="PR01040">
    <property type="entry name" value="TRNASYNTHTYR"/>
</dbReference>
<dbReference type="SUPFAM" id="SSF52374">
    <property type="entry name" value="Nucleotidylyl transferase"/>
    <property type="match status" value="1"/>
</dbReference>
<reference key="1">
    <citation type="journal article" date="2001" name="Nature">
        <title>Genome sequence and gene compaction of the eukaryote parasite Encephalitozoon cuniculi.</title>
        <authorList>
            <person name="Katinka M.D."/>
            <person name="Duprat S."/>
            <person name="Cornillot E."/>
            <person name="Metenier G."/>
            <person name="Thomarat F."/>
            <person name="Prensier G."/>
            <person name="Barbe V."/>
            <person name="Peyretaillade E."/>
            <person name="Brottier P."/>
            <person name="Wincker P."/>
            <person name="Delbac F."/>
            <person name="El Alaoui H."/>
            <person name="Peyret P."/>
            <person name="Saurin W."/>
            <person name="Gouy M."/>
            <person name="Weissenbach J."/>
            <person name="Vivares C.P."/>
        </authorList>
    </citation>
    <scope>NUCLEOTIDE SEQUENCE [LARGE SCALE GENOMIC DNA]</scope>
    <source>
        <strain>GB-M1</strain>
    </source>
</reference>
<evidence type="ECO:0000250" key="1"/>
<evidence type="ECO:0000305" key="2"/>
<feature type="chain" id="PRO_0000388399" description="Probable tyrosine--tRNA ligase, cytoplasmic">
    <location>
        <begin position="1"/>
        <end position="337"/>
    </location>
</feature>
<feature type="short sequence motif" description="'HIGH' region" evidence="1">
    <location>
        <begin position="40"/>
        <end position="48"/>
    </location>
</feature>
<feature type="short sequence motif" description="'KMSKS' region" evidence="1">
    <location>
        <begin position="218"/>
        <end position="222"/>
    </location>
</feature>
<feature type="binding site" evidence="1">
    <location>
        <position position="35"/>
    </location>
    <ligand>
        <name>L-tyrosine</name>
        <dbReference type="ChEBI" id="CHEBI:58315"/>
    </ligand>
</feature>
<feature type="binding site" evidence="1">
    <location>
        <position position="162"/>
    </location>
    <ligand>
        <name>L-tyrosine</name>
        <dbReference type="ChEBI" id="CHEBI:58315"/>
    </ligand>
</feature>
<feature type="binding site" evidence="1">
    <location>
        <position position="166"/>
    </location>
    <ligand>
        <name>L-tyrosine</name>
        <dbReference type="ChEBI" id="CHEBI:58315"/>
    </ligand>
</feature>
<feature type="binding site" evidence="1">
    <location>
        <position position="169"/>
    </location>
    <ligand>
        <name>L-tyrosine</name>
        <dbReference type="ChEBI" id="CHEBI:58315"/>
    </ligand>
</feature>
<feature type="binding site" evidence="1">
    <location>
        <position position="184"/>
    </location>
    <ligand>
        <name>L-tyrosine</name>
        <dbReference type="ChEBI" id="CHEBI:58315"/>
    </ligand>
</feature>
<keyword id="KW-0030">Aminoacyl-tRNA synthetase</keyword>
<keyword id="KW-0067">ATP-binding</keyword>
<keyword id="KW-0963">Cytoplasm</keyword>
<keyword id="KW-0436">Ligase</keyword>
<keyword id="KW-0547">Nucleotide-binding</keyword>
<keyword id="KW-0648">Protein biosynthesis</keyword>
<keyword id="KW-1185">Reference proteome</keyword>
<sequence length="337" mass="39143">MSVEQKLYLITRNLQEILGEEELKRIVSERELNVYWGTAITGKPHIAYLVPLMKIKDFVDAGCNVKILFADIHGFLDNLKAPIEKVQHRCAYYEKLIKSALKMLCVDLDRIQFVKGSEFQKSERYTMDLYRILSITSKHDAKKAGAEVVRQVENPMVSSLVYPSMQALDEVHLSVDAQFGGVDQRKIFTYARKYLPLLNYEKRIHLMSPMLPGLNSDKMSSSDDLSKIDLMDSKEAIWRKIRKCFCEEGNKDNGLMMIFSHIVFPILQLKGECVRITDRDGREMAFEKYQEFEEEFVRKSIHPGDLKSNAARLIDEIIRPIREEMEKDLDMVREAYN</sequence>
<name>SYYC_ENCCU</name>
<accession>Q8SRV7</accession>
<protein>
    <recommendedName>
        <fullName>Probable tyrosine--tRNA ligase, cytoplasmic</fullName>
        <ecNumber>6.1.1.1</ecNumber>
    </recommendedName>
    <alternativeName>
        <fullName>Tyrosyl-tRNA synthetase</fullName>
        <shortName>TyrRS</shortName>
    </alternativeName>
</protein>